<proteinExistence type="inferred from homology"/>
<evidence type="ECO:0000255" key="1">
    <source>
        <dbReference type="HAMAP-Rule" id="MF_01197"/>
    </source>
</evidence>
<dbReference type="EMBL" id="CP000922">
    <property type="protein sequence ID" value="ACJ34177.1"/>
    <property type="molecule type" value="Genomic_DNA"/>
</dbReference>
<dbReference type="SMR" id="B7GFB6"/>
<dbReference type="STRING" id="491915.Aflv_1816"/>
<dbReference type="KEGG" id="afl:Aflv_1816"/>
<dbReference type="eggNOG" id="COG1799">
    <property type="taxonomic scope" value="Bacteria"/>
</dbReference>
<dbReference type="HOGENOM" id="CLU_078499_4_1_9"/>
<dbReference type="Proteomes" id="UP000000742">
    <property type="component" value="Chromosome"/>
</dbReference>
<dbReference type="GO" id="GO:0005737">
    <property type="term" value="C:cytoplasm"/>
    <property type="evidence" value="ECO:0007669"/>
    <property type="project" value="UniProtKB-SubCell"/>
</dbReference>
<dbReference type="GO" id="GO:0000917">
    <property type="term" value="P:division septum assembly"/>
    <property type="evidence" value="ECO:0007669"/>
    <property type="project" value="UniProtKB-KW"/>
</dbReference>
<dbReference type="GO" id="GO:0043093">
    <property type="term" value="P:FtsZ-dependent cytokinesis"/>
    <property type="evidence" value="ECO:0007669"/>
    <property type="project" value="UniProtKB-UniRule"/>
</dbReference>
<dbReference type="Gene3D" id="3.30.110.150">
    <property type="entry name" value="SepF-like protein"/>
    <property type="match status" value="1"/>
</dbReference>
<dbReference type="HAMAP" id="MF_01197">
    <property type="entry name" value="SepF"/>
    <property type="match status" value="1"/>
</dbReference>
<dbReference type="InterPro" id="IPR023052">
    <property type="entry name" value="Cell_div_SepF"/>
</dbReference>
<dbReference type="InterPro" id="IPR007561">
    <property type="entry name" value="Cell_div_SepF/SepF-rel"/>
</dbReference>
<dbReference type="InterPro" id="IPR038594">
    <property type="entry name" value="SepF-like_sf"/>
</dbReference>
<dbReference type="PANTHER" id="PTHR35798">
    <property type="entry name" value="CELL DIVISION PROTEIN SEPF"/>
    <property type="match status" value="1"/>
</dbReference>
<dbReference type="PANTHER" id="PTHR35798:SF1">
    <property type="entry name" value="CELL DIVISION PROTEIN SEPF"/>
    <property type="match status" value="1"/>
</dbReference>
<dbReference type="Pfam" id="PF04472">
    <property type="entry name" value="SepF"/>
    <property type="match status" value="1"/>
</dbReference>
<keyword id="KW-0131">Cell cycle</keyword>
<keyword id="KW-0132">Cell division</keyword>
<keyword id="KW-0963">Cytoplasm</keyword>
<keyword id="KW-0717">Septation</keyword>
<name>SEPF_ANOFW</name>
<accession>B7GFB6</accession>
<feature type="chain" id="PRO_1000138457" description="Cell division protein SepF">
    <location>
        <begin position="1"/>
        <end position="141"/>
    </location>
</feature>
<comment type="function">
    <text evidence="1">Cell division protein that is part of the divisome complex and is recruited early to the Z-ring. Probably stimulates Z-ring formation, perhaps through the cross-linking of FtsZ protofilaments. Its function overlaps with FtsA.</text>
</comment>
<comment type="subunit">
    <text evidence="1">Homodimer. Interacts with FtsZ.</text>
</comment>
<comment type="subcellular location">
    <subcellularLocation>
        <location evidence="1">Cytoplasm</location>
    </subcellularLocation>
    <text evidence="1">Localizes to the division site, in a FtsZ-dependent manner.</text>
</comment>
<comment type="similarity">
    <text evidence="1">Belongs to the SepF family.</text>
</comment>
<reference key="1">
    <citation type="journal article" date="2008" name="Genome Biol.">
        <title>Encapsulated in silica: genome, proteome and physiology of the thermophilic bacterium Anoxybacillus flavithermus WK1.</title>
        <authorList>
            <person name="Saw J.H."/>
            <person name="Mountain B.W."/>
            <person name="Feng L."/>
            <person name="Omelchenko M.V."/>
            <person name="Hou S."/>
            <person name="Saito J.A."/>
            <person name="Stott M.B."/>
            <person name="Li D."/>
            <person name="Zhao G."/>
            <person name="Wu J."/>
            <person name="Galperin M.Y."/>
            <person name="Koonin E.V."/>
            <person name="Makarova K.S."/>
            <person name="Wolf Y.I."/>
            <person name="Rigden D.J."/>
            <person name="Dunfield P.F."/>
            <person name="Wang L."/>
            <person name="Alam M."/>
        </authorList>
    </citation>
    <scope>NUCLEOTIDE SEQUENCE [LARGE SCALE GENOMIC DNA]</scope>
    <source>
        <strain>DSM 21510 / WK1</strain>
    </source>
</reference>
<protein>
    <recommendedName>
        <fullName evidence="1">Cell division protein SepF</fullName>
    </recommendedName>
</protein>
<sequence>MMGFVKKIRDFFDLDEEKWEEDEYEQEEVAQQPKVEQKQNVVSLQSVQKSSKLVLFEPRAYAEVQEIADHLKNRRAVVVNVHRVDRDQARRIVDFLSGTVYAIGGDIQQVGSTIFLCTPDNVDVSGSISIVSDDEPTIKRW</sequence>
<organism>
    <name type="scientific">Anoxybacillus flavithermus (strain DSM 21510 / WK1)</name>
    <dbReference type="NCBI Taxonomy" id="491915"/>
    <lineage>
        <taxon>Bacteria</taxon>
        <taxon>Bacillati</taxon>
        <taxon>Bacillota</taxon>
        <taxon>Bacilli</taxon>
        <taxon>Bacillales</taxon>
        <taxon>Anoxybacillaceae</taxon>
        <taxon>Anoxybacillus</taxon>
    </lineage>
</organism>
<gene>
    <name evidence="1" type="primary">sepF</name>
    <name type="ordered locus">Aflv_1816</name>
</gene>